<dbReference type="EMBL" id="BA000004">
    <property type="protein sequence ID" value="BAB06145.1"/>
    <property type="molecule type" value="Genomic_DNA"/>
</dbReference>
<dbReference type="PIR" id="B83953">
    <property type="entry name" value="B83953"/>
</dbReference>
<dbReference type="RefSeq" id="WP_010898579.1">
    <property type="nucleotide sequence ID" value="NC_002570.2"/>
</dbReference>
<dbReference type="SMR" id="Q9KA64"/>
<dbReference type="STRING" id="272558.gene:10728324"/>
<dbReference type="KEGG" id="bha:BH2426"/>
<dbReference type="eggNOG" id="COG0264">
    <property type="taxonomic scope" value="Bacteria"/>
</dbReference>
<dbReference type="HOGENOM" id="CLU_047155_0_2_9"/>
<dbReference type="OrthoDB" id="9808348at2"/>
<dbReference type="Proteomes" id="UP000001258">
    <property type="component" value="Chromosome"/>
</dbReference>
<dbReference type="GO" id="GO:0005737">
    <property type="term" value="C:cytoplasm"/>
    <property type="evidence" value="ECO:0007669"/>
    <property type="project" value="UniProtKB-SubCell"/>
</dbReference>
<dbReference type="GO" id="GO:0003746">
    <property type="term" value="F:translation elongation factor activity"/>
    <property type="evidence" value="ECO:0007669"/>
    <property type="project" value="UniProtKB-UniRule"/>
</dbReference>
<dbReference type="CDD" id="cd14275">
    <property type="entry name" value="UBA_EF-Ts"/>
    <property type="match status" value="1"/>
</dbReference>
<dbReference type="FunFam" id="1.10.286.20:FF:000003">
    <property type="entry name" value="Elongation factor Ts"/>
    <property type="match status" value="1"/>
</dbReference>
<dbReference type="FunFam" id="1.10.8.10:FF:000001">
    <property type="entry name" value="Elongation factor Ts"/>
    <property type="match status" value="1"/>
</dbReference>
<dbReference type="Gene3D" id="1.10.286.20">
    <property type="match status" value="1"/>
</dbReference>
<dbReference type="Gene3D" id="1.10.8.10">
    <property type="entry name" value="DNA helicase RuvA subunit, C-terminal domain"/>
    <property type="match status" value="1"/>
</dbReference>
<dbReference type="Gene3D" id="3.30.479.20">
    <property type="entry name" value="Elongation factor Ts, dimerisation domain"/>
    <property type="match status" value="2"/>
</dbReference>
<dbReference type="HAMAP" id="MF_00050">
    <property type="entry name" value="EF_Ts"/>
    <property type="match status" value="1"/>
</dbReference>
<dbReference type="InterPro" id="IPR036402">
    <property type="entry name" value="EF-Ts_dimer_sf"/>
</dbReference>
<dbReference type="InterPro" id="IPR001816">
    <property type="entry name" value="Transl_elong_EFTs/EF1B"/>
</dbReference>
<dbReference type="InterPro" id="IPR014039">
    <property type="entry name" value="Transl_elong_EFTs/EF1B_dimer"/>
</dbReference>
<dbReference type="InterPro" id="IPR018101">
    <property type="entry name" value="Transl_elong_Ts_CS"/>
</dbReference>
<dbReference type="InterPro" id="IPR009060">
    <property type="entry name" value="UBA-like_sf"/>
</dbReference>
<dbReference type="NCBIfam" id="TIGR00116">
    <property type="entry name" value="tsf"/>
    <property type="match status" value="1"/>
</dbReference>
<dbReference type="PANTHER" id="PTHR11741">
    <property type="entry name" value="ELONGATION FACTOR TS"/>
    <property type="match status" value="1"/>
</dbReference>
<dbReference type="PANTHER" id="PTHR11741:SF0">
    <property type="entry name" value="ELONGATION FACTOR TS, MITOCHONDRIAL"/>
    <property type="match status" value="1"/>
</dbReference>
<dbReference type="Pfam" id="PF00889">
    <property type="entry name" value="EF_TS"/>
    <property type="match status" value="1"/>
</dbReference>
<dbReference type="SUPFAM" id="SSF54713">
    <property type="entry name" value="Elongation factor Ts (EF-Ts), dimerisation domain"/>
    <property type="match status" value="2"/>
</dbReference>
<dbReference type="SUPFAM" id="SSF46934">
    <property type="entry name" value="UBA-like"/>
    <property type="match status" value="1"/>
</dbReference>
<dbReference type="PROSITE" id="PS01126">
    <property type="entry name" value="EF_TS_1"/>
    <property type="match status" value="1"/>
</dbReference>
<dbReference type="PROSITE" id="PS01127">
    <property type="entry name" value="EF_TS_2"/>
    <property type="match status" value="1"/>
</dbReference>
<evidence type="ECO:0000250" key="1"/>
<evidence type="ECO:0000305" key="2"/>
<sequence length="293" mass="32524">MAITASMVKELREKTGAGMMDCKKALTETNGDMDKAIDYLREKGIAKAAKKADRVAAEGLAYVKAEGNHAIIVEVNSETDFVAKNENFQKLVAELASHLLEKRPASVEEALEQPFNGGETVQEYINSAIAKIGEKLSLRRFEIVEKEDGDVFGQYIHMGGRIGVLSVIGQSSDEELAKDIAMHVAAINPTYVTRDQVSEDEVAREREVLKQQALNEGKPENIVEKMVEGRLGKYFEQVCLLDQAFVKDGDQKVGKYVQSKGATVKEFIRYEVGEGLEKREDNFAEEVMSQVKK</sequence>
<reference key="1">
    <citation type="journal article" date="2000" name="Nucleic Acids Res.">
        <title>Complete genome sequence of the alkaliphilic bacterium Bacillus halodurans and genomic sequence comparison with Bacillus subtilis.</title>
        <authorList>
            <person name="Takami H."/>
            <person name="Nakasone K."/>
            <person name="Takaki Y."/>
            <person name="Maeno G."/>
            <person name="Sasaki R."/>
            <person name="Masui N."/>
            <person name="Fuji F."/>
            <person name="Hirama C."/>
            <person name="Nakamura Y."/>
            <person name="Ogasawara N."/>
            <person name="Kuhara S."/>
            <person name="Horikoshi K."/>
        </authorList>
    </citation>
    <scope>NUCLEOTIDE SEQUENCE [LARGE SCALE GENOMIC DNA]</scope>
    <source>
        <strain>ATCC BAA-125 / DSM 18197 / FERM 7344 / JCM 9153 / C-125</strain>
    </source>
</reference>
<comment type="function">
    <text evidence="1">Associates with the EF-Tu.GDP complex and induces the exchange of GDP to GTP. It remains bound to the aminoacyl-tRNA.EF-Tu.GTP complex up to the GTP hydrolysis stage on the ribosome (By similarity).</text>
</comment>
<comment type="subcellular location">
    <subcellularLocation>
        <location evidence="1">Cytoplasm</location>
    </subcellularLocation>
</comment>
<comment type="similarity">
    <text evidence="2">Belongs to the EF-Ts family.</text>
</comment>
<name>EFTS_HALH5</name>
<feature type="initiator methionine" description="Removed" evidence="1">
    <location>
        <position position="1"/>
    </location>
</feature>
<feature type="chain" id="PRO_0000161073" description="Elongation factor Ts">
    <location>
        <begin position="2"/>
        <end position="293"/>
    </location>
</feature>
<feature type="region of interest" description="Involved in Mg(2+) ion dislocation from EF-Tu" evidence="1">
    <location>
        <begin position="79"/>
        <end position="82"/>
    </location>
</feature>
<protein>
    <recommendedName>
        <fullName>Elongation factor Ts</fullName>
        <shortName>EF-Ts</shortName>
    </recommendedName>
</protein>
<keyword id="KW-0963">Cytoplasm</keyword>
<keyword id="KW-0251">Elongation factor</keyword>
<keyword id="KW-0648">Protein biosynthesis</keyword>
<keyword id="KW-1185">Reference proteome</keyword>
<organism>
    <name type="scientific">Halalkalibacterium halodurans (strain ATCC BAA-125 / DSM 18197 / FERM 7344 / JCM 9153 / C-125)</name>
    <name type="common">Bacillus halodurans</name>
    <dbReference type="NCBI Taxonomy" id="272558"/>
    <lineage>
        <taxon>Bacteria</taxon>
        <taxon>Bacillati</taxon>
        <taxon>Bacillota</taxon>
        <taxon>Bacilli</taxon>
        <taxon>Bacillales</taxon>
        <taxon>Bacillaceae</taxon>
        <taxon>Halalkalibacterium (ex Joshi et al. 2022)</taxon>
    </lineage>
</organism>
<gene>
    <name type="primary">tsf</name>
    <name type="ordered locus">BH2426</name>
</gene>
<proteinExistence type="inferred from homology"/>
<accession>Q9KA64</accession>